<gene>
    <name type="primary">corA</name>
    <name type="ordered locus">MJ1033</name>
</gene>
<dbReference type="EMBL" id="L77117">
    <property type="protein sequence ID" value="AAB99037.1"/>
    <property type="molecule type" value="Genomic_DNA"/>
</dbReference>
<dbReference type="PIR" id="H64428">
    <property type="entry name" value="H64428"/>
</dbReference>
<dbReference type="RefSeq" id="WP_010870546.1">
    <property type="nucleotide sequence ID" value="NC_000909.1"/>
</dbReference>
<dbReference type="PDB" id="4CY4">
    <property type="method" value="EM"/>
    <property type="resolution" value="21.60 A"/>
    <property type="chains" value="A/B/C/D/E=1-317"/>
</dbReference>
<dbReference type="PDB" id="4EGW">
    <property type="method" value="X-ray"/>
    <property type="resolution" value="2.50 A"/>
    <property type="chains" value="A/B=1-258"/>
</dbReference>
<dbReference type="PDB" id="4EV6">
    <property type="method" value="X-ray"/>
    <property type="resolution" value="3.20 A"/>
    <property type="chains" value="A/B/C/D/E=1-317"/>
</dbReference>
<dbReference type="PDBsum" id="4CY4"/>
<dbReference type="PDBsum" id="4EGW"/>
<dbReference type="PDBsum" id="4EV6"/>
<dbReference type="EMDB" id="EMD-2626"/>
<dbReference type="SMR" id="Q58439"/>
<dbReference type="DIP" id="DIP-60086N"/>
<dbReference type="FunCoup" id="Q58439">
    <property type="interactions" value="6"/>
</dbReference>
<dbReference type="STRING" id="243232.MJ_1033"/>
<dbReference type="TCDB" id="1.A.35.3.1">
    <property type="family name" value="the cora metal ion transporter (mit) family"/>
</dbReference>
<dbReference type="PaxDb" id="243232-MJ_1033"/>
<dbReference type="EnsemblBacteria" id="AAB99037">
    <property type="protein sequence ID" value="AAB99037"/>
    <property type="gene ID" value="MJ_1033"/>
</dbReference>
<dbReference type="GeneID" id="1451930"/>
<dbReference type="KEGG" id="mja:MJ_1033"/>
<dbReference type="eggNOG" id="arCOG02265">
    <property type="taxonomic scope" value="Archaea"/>
</dbReference>
<dbReference type="HOGENOM" id="CLU_007127_0_0_2"/>
<dbReference type="InParanoid" id="Q58439"/>
<dbReference type="OrthoDB" id="28779at2157"/>
<dbReference type="PhylomeDB" id="Q58439"/>
<dbReference type="BRENDA" id="7.2.2.14">
    <property type="organism ID" value="3260"/>
</dbReference>
<dbReference type="EvolutionaryTrace" id="Q58439"/>
<dbReference type="Proteomes" id="UP000000805">
    <property type="component" value="Chromosome"/>
</dbReference>
<dbReference type="GO" id="GO:0005886">
    <property type="term" value="C:plasma membrane"/>
    <property type="evidence" value="ECO:0000318"/>
    <property type="project" value="GO_Central"/>
</dbReference>
<dbReference type="GO" id="GO:0050897">
    <property type="term" value="F:cobalt ion binding"/>
    <property type="evidence" value="ECO:0000318"/>
    <property type="project" value="GO_Central"/>
</dbReference>
<dbReference type="GO" id="GO:0015087">
    <property type="term" value="F:cobalt ion transmembrane transporter activity"/>
    <property type="evidence" value="ECO:0000318"/>
    <property type="project" value="GO_Central"/>
</dbReference>
<dbReference type="GO" id="GO:0042802">
    <property type="term" value="F:identical protein binding"/>
    <property type="evidence" value="ECO:0000353"/>
    <property type="project" value="IntAct"/>
</dbReference>
<dbReference type="GO" id="GO:0000287">
    <property type="term" value="F:magnesium ion binding"/>
    <property type="evidence" value="ECO:0000318"/>
    <property type="project" value="GO_Central"/>
</dbReference>
<dbReference type="GO" id="GO:0015095">
    <property type="term" value="F:magnesium ion transmembrane transporter activity"/>
    <property type="evidence" value="ECO:0000318"/>
    <property type="project" value="GO_Central"/>
</dbReference>
<dbReference type="CDD" id="cd12822">
    <property type="entry name" value="TmCorA-like"/>
    <property type="match status" value="1"/>
</dbReference>
<dbReference type="FunFam" id="1.20.58.340:FF:000004">
    <property type="entry name" value="Magnesium transport protein CorA"/>
    <property type="match status" value="1"/>
</dbReference>
<dbReference type="Gene3D" id="3.30.460.20">
    <property type="entry name" value="CorA soluble domain-like"/>
    <property type="match status" value="1"/>
</dbReference>
<dbReference type="Gene3D" id="1.20.58.340">
    <property type="entry name" value="Magnesium transport protein CorA, transmembrane region"/>
    <property type="match status" value="2"/>
</dbReference>
<dbReference type="InterPro" id="IPR045861">
    <property type="entry name" value="CorA_cytoplasmic_dom"/>
</dbReference>
<dbReference type="InterPro" id="IPR045863">
    <property type="entry name" value="CorA_TM1_TM2"/>
</dbReference>
<dbReference type="InterPro" id="IPR004488">
    <property type="entry name" value="Mg/Co-transport_prot_CorA"/>
</dbReference>
<dbReference type="InterPro" id="IPR002523">
    <property type="entry name" value="MgTranspt_CorA/ZnTranspt_ZntB"/>
</dbReference>
<dbReference type="NCBIfam" id="TIGR00383">
    <property type="entry name" value="corA"/>
    <property type="match status" value="1"/>
</dbReference>
<dbReference type="PANTHER" id="PTHR46494">
    <property type="entry name" value="CORA FAMILY METAL ION TRANSPORTER (EUROFUNG)"/>
    <property type="match status" value="1"/>
</dbReference>
<dbReference type="PANTHER" id="PTHR46494:SF1">
    <property type="entry name" value="CORA FAMILY METAL ION TRANSPORTER (EUROFUNG)"/>
    <property type="match status" value="1"/>
</dbReference>
<dbReference type="Pfam" id="PF01544">
    <property type="entry name" value="CorA"/>
    <property type="match status" value="1"/>
</dbReference>
<dbReference type="SUPFAM" id="SSF143865">
    <property type="entry name" value="CorA soluble domain-like"/>
    <property type="match status" value="1"/>
</dbReference>
<dbReference type="SUPFAM" id="SSF144083">
    <property type="entry name" value="Magnesium transport protein CorA, transmembrane region"/>
    <property type="match status" value="1"/>
</dbReference>
<protein>
    <recommendedName>
        <fullName>Cobalt/magnesium transport protein CorA</fullName>
    </recommendedName>
</protein>
<organism>
    <name type="scientific">Methanocaldococcus jannaschii (strain ATCC 43067 / DSM 2661 / JAL-1 / JCM 10045 / NBRC 100440)</name>
    <name type="common">Methanococcus jannaschii</name>
    <dbReference type="NCBI Taxonomy" id="243232"/>
    <lineage>
        <taxon>Archaea</taxon>
        <taxon>Methanobacteriati</taxon>
        <taxon>Methanobacteriota</taxon>
        <taxon>Methanomada group</taxon>
        <taxon>Methanococci</taxon>
        <taxon>Methanococcales</taxon>
        <taxon>Methanocaldococcaceae</taxon>
        <taxon>Methanocaldococcus</taxon>
    </lineage>
</organism>
<accession>Q58439</accession>
<sequence length="317" mass="37142">MITVIAIAKDGSIVEPKLDEISFEDYRLIWIDCYDPKDEELYKLSKKIGISVSDLQIGLDEQEIPRVEEDEDFYLIIYKAPLFEEDITTTSLGIYIKNNLLLTIHSDKIKAIGRLHKLISTKKPRIVFERGIGFLLYHILNEITRSYSRILMNLEDELEELEDKLLAGYDREVMEKILGLRKTLVYFHKSLIANRDVLVLLKRKYLPITTKEDRENFEDLYYDTLQLIDMSATYREVLTSMMDITLSLENIKMNQIMKILTMVTTIFAVPMWITGIYGMNFSYLPLANNPQGFWLVMALMVVIIMIFVYIFRRSGWI</sequence>
<proteinExistence type="evidence at protein level"/>
<name>CORA_METJA</name>
<reference key="1">
    <citation type="journal article" date="1996" name="Science">
        <title>Complete genome sequence of the methanogenic archaeon, Methanococcus jannaschii.</title>
        <authorList>
            <person name="Bult C.J."/>
            <person name="White O."/>
            <person name="Olsen G.J."/>
            <person name="Zhou L."/>
            <person name="Fleischmann R.D."/>
            <person name="Sutton G.G."/>
            <person name="Blake J.A."/>
            <person name="FitzGerald L.M."/>
            <person name="Clayton R.A."/>
            <person name="Gocayne J.D."/>
            <person name="Kerlavage A.R."/>
            <person name="Dougherty B.A."/>
            <person name="Tomb J.-F."/>
            <person name="Adams M.D."/>
            <person name="Reich C.I."/>
            <person name="Overbeek R."/>
            <person name="Kirkness E.F."/>
            <person name="Weinstock K.G."/>
            <person name="Merrick J.M."/>
            <person name="Glodek A."/>
            <person name="Scott J.L."/>
            <person name="Geoghagen N.S.M."/>
            <person name="Weidman J.F."/>
            <person name="Fuhrmann J.L."/>
            <person name="Nguyen D."/>
            <person name="Utterback T.R."/>
            <person name="Kelley J.M."/>
            <person name="Peterson J.D."/>
            <person name="Sadow P.W."/>
            <person name="Hanna M.C."/>
            <person name="Cotton M.D."/>
            <person name="Roberts K.M."/>
            <person name="Hurst M.A."/>
            <person name="Kaine B.P."/>
            <person name="Borodovsky M."/>
            <person name="Klenk H.-P."/>
            <person name="Fraser C.M."/>
            <person name="Smith H.O."/>
            <person name="Woese C.R."/>
            <person name="Venter J.C."/>
        </authorList>
    </citation>
    <scope>NUCLEOTIDE SEQUENCE [LARGE SCALE GENOMIC DNA]</scope>
    <source>
        <strain>ATCC 43067 / DSM 2661 / JAL-1 / JCM 10045 / NBRC 100440</strain>
    </source>
</reference>
<reference key="2">
    <citation type="journal article" date="1998" name="J. Bacteriol.">
        <title>Functional similarity between archaeal and bacterial CorA magnesium transporters.</title>
        <authorList>
            <person name="Smith R.L."/>
            <person name="Gottlieb E."/>
            <person name="Kucharski L.M."/>
            <person name="Maguire M.E."/>
        </authorList>
    </citation>
    <scope>FUNCTION</scope>
    <scope>CATALYTIC ACTIVITY</scope>
    <scope>SUBCELLULAR LOCATION</scope>
</reference>
<reference key="3">
    <citation type="journal article" date="2000" name="J. Biol. Chem.">
        <title>Cation hexaammines are selective and potent inhibitors of the CorA magnesium transport system.</title>
        <authorList>
            <person name="Kucharski L.M."/>
            <person name="Lubbe W.J."/>
            <person name="Maguire M.E."/>
        </authorList>
    </citation>
    <scope>FUNCTION</scope>
    <scope>CATALYTIC ACTIVITY</scope>
    <scope>ACTIVITY REGULATION</scope>
    <scope>INHIBITION BY CATION HEXAAMMINES</scope>
    <scope>SUBCELLULAR LOCATION</scope>
</reference>
<reference key="4">
    <citation type="journal article" date="2004" name="J. Bacteriol.">
        <title>The CorA Mg2+ transporter is a homotetramer.</title>
        <authorList>
            <person name="Warren M.A."/>
            <person name="Kucharski L.M."/>
            <person name="Veenstra A."/>
            <person name="Shi L."/>
            <person name="Grulich P.F."/>
            <person name="Maguire M.E."/>
        </authorList>
    </citation>
    <scope>SUBUNIT</scope>
</reference>
<reference key="5">
    <citation type="journal article" date="2012" name="Proc. Natl. Acad. Sci. U.S.A.">
        <title>Structural insights into the mechanisms of Mg2+ uptake, transport, and gating by CorA.</title>
        <authorList>
            <person name="Guskov A."/>
            <person name="Nordin N."/>
            <person name="Reynaud A."/>
            <person name="Engman H."/>
            <person name="Lundback A.K."/>
            <person name="Jong A.J."/>
            <person name="Cornvik T."/>
            <person name="Phua T."/>
            <person name="Eshaghi S."/>
        </authorList>
    </citation>
    <scope>X-RAY CRYSTALLOGRAPHY (2.50 ANGSTROMS) OF 1-317 IN COMPLEX WITH MAGNESIUM IONS</scope>
    <scope>SUBCELLULAR LOCATION</scope>
    <scope>TOPOLOGY</scope>
    <scope>SUBUNIT</scope>
    <scope>MOTIF</scope>
    <scope>DOMAIN</scope>
</reference>
<reference key="6">
    <citation type="journal article" date="2015" name="Biochim. Biophys. Acta">
        <title>The Cryo-EM structure of the CorA channel from Methanocaldococcus jannaschii in low magnesium conditions.</title>
        <authorList>
            <person name="Cleverley R.M."/>
            <person name="Kean J."/>
            <person name="Shintre C.A."/>
            <person name="Baldock C."/>
            <person name="Derrick J.P."/>
            <person name="Ford R.C."/>
            <person name="Prince S.M."/>
        </authorList>
    </citation>
    <scope>STRUCTURE BY ELECTRON MICROSCOPY (21.60 ANGSTROMS)</scope>
    <scope>SUBCELLULAR LOCATION</scope>
    <scope>SUBUNIT</scope>
    <scope>DOMAIN</scope>
</reference>
<keyword id="KW-0002">3D-structure</keyword>
<keyword id="KW-1003">Cell membrane</keyword>
<keyword id="KW-0406">Ion transport</keyword>
<keyword id="KW-0460">Magnesium</keyword>
<keyword id="KW-0472">Membrane</keyword>
<keyword id="KW-1185">Reference proteome</keyword>
<keyword id="KW-0812">Transmembrane</keyword>
<keyword id="KW-1133">Transmembrane helix</keyword>
<keyword id="KW-0813">Transport</keyword>
<comment type="function">
    <text evidence="1 2 6">Mediates influx of magnesium ions (PubMed:10748031, PubMed:9573171). Alternates between open and closed states. Activated by low cytoplasmic Mg(2+) levels. Inactive when cytoplasmic Mg(2+) levels are high (By similarity).</text>
</comment>
<comment type="catalytic activity">
    <reaction evidence="2 6">
        <text>Mg(2+)(in) = Mg(2+)(out)</text>
        <dbReference type="Rhea" id="RHEA:29827"/>
        <dbReference type="ChEBI" id="CHEBI:18420"/>
    </reaction>
</comment>
<comment type="activity regulation">
    <text evidence="2">Inhibited by cation hexaammines.</text>
</comment>
<comment type="subunit">
    <text evidence="1 3 4 5">Homopentamer (PubMed:23091000, PubMed:26051127). In the absence of Mg(2+), interactions between subunits are weakened, and dimers, trimers and tetramers can be observed in vitro (By similarity). Was initially proposed to be a homotetramer, based on the cross-linking studies (PubMed:15231793). This is in contradiction with current 3D-structures that clearly show it is a homopentamer (PubMed:23091000, PubMed:26051127).</text>
</comment>
<comment type="interaction">
    <interactant intactId="EBI-16019330">
        <id>Q58439</id>
    </interactant>
    <interactant intactId="EBI-16019330">
        <id>Q58439</id>
        <label>corA</label>
    </interactant>
    <organismsDiffer>false</organismsDiffer>
    <experiments>2</experiments>
</comment>
<comment type="subcellular location">
    <subcellularLocation>
        <location evidence="8 10 11">Cell membrane</location>
        <topology evidence="4 5">Multi-pass membrane protein</topology>
    </subcellularLocation>
</comment>
<comment type="domain">
    <text evidence="4 5 7">The central ion permeation pathway is formed by the first transmembrane domain from each of the five subunits. Mg(2+) binding strengthens interactions between subunits and leads to the formation of a symmetrical homopentamer surrounding a closed ion permeation pathway (PubMed:23091000). Low cytoplasmic Mg(2+) concentrations trigger both a conformation change within each subunit and a loosening of the interactions between subunits. This results in an open ion conduction pathway. In addition, this results in a less symmetrical shape of the whole complex (PubMed:26051127).</text>
</comment>
<comment type="similarity">
    <text evidence="7">Belongs to the CorA metal ion transporter (MIT) (TC 1.A.35) family.</text>
</comment>
<evidence type="ECO:0000250" key="1">
    <source>
        <dbReference type="UniProtKB" id="Q9WZ31"/>
    </source>
</evidence>
<evidence type="ECO:0000269" key="2">
    <source>
    </source>
</evidence>
<evidence type="ECO:0000269" key="3">
    <source>
    </source>
</evidence>
<evidence type="ECO:0000269" key="4">
    <source>
    </source>
</evidence>
<evidence type="ECO:0000269" key="5">
    <source>
    </source>
</evidence>
<evidence type="ECO:0000269" key="6">
    <source>
    </source>
</evidence>
<evidence type="ECO:0000305" key="7"/>
<evidence type="ECO:0000305" key="8">
    <source>
    </source>
</evidence>
<evidence type="ECO:0000305" key="9">
    <source>
    </source>
</evidence>
<evidence type="ECO:0000305" key="10">
    <source>
    </source>
</evidence>
<evidence type="ECO:0000305" key="11">
    <source>
    </source>
</evidence>
<evidence type="ECO:0007829" key="12">
    <source>
        <dbReference type="PDB" id="4EGW"/>
    </source>
</evidence>
<evidence type="ECO:0007829" key="13">
    <source>
        <dbReference type="PDB" id="4EV6"/>
    </source>
</evidence>
<feature type="chain" id="PRO_0000201534" description="Cobalt/magnesium transport protein CorA">
    <location>
        <begin position="1"/>
        <end position="317"/>
    </location>
</feature>
<feature type="topological domain" description="Cytoplasmic" evidence="7">
    <location>
        <begin position="1"/>
        <end position="258"/>
    </location>
</feature>
<feature type="transmembrane region" description="Helical" evidence="4">
    <location>
        <begin position="259"/>
        <end position="279"/>
    </location>
</feature>
<feature type="topological domain" description="Extracellular" evidence="7">
    <location>
        <begin position="280"/>
        <end position="290"/>
    </location>
</feature>
<feature type="transmembrane region" description="Helical" evidence="4">
    <location>
        <begin position="291"/>
        <end position="311"/>
    </location>
</feature>
<feature type="topological domain" description="Cytoplasmic" evidence="7">
    <location>
        <begin position="312"/>
        <end position="317"/>
    </location>
</feature>
<feature type="short sequence motif" description="Probable selectivity filter" evidence="9">
    <location>
        <begin position="278"/>
        <end position="280"/>
    </location>
</feature>
<feature type="site" description="Essential for ion permeation" evidence="1">
    <location>
        <position position="254"/>
    </location>
</feature>
<feature type="site" description="Important for closing the ion permeation pathway in the closed state" evidence="4">
    <location>
        <position position="260"/>
    </location>
</feature>
<feature type="site" description="Threonine that confers selectivity for Co(2+) transport" evidence="1">
    <location>
        <position position="261"/>
    </location>
</feature>
<feature type="strand" evidence="12">
    <location>
        <begin position="6"/>
        <end position="11"/>
    </location>
</feature>
<feature type="turn" evidence="12">
    <location>
        <begin position="12"/>
        <end position="14"/>
    </location>
</feature>
<feature type="strand" evidence="12">
    <location>
        <begin position="25"/>
        <end position="27"/>
    </location>
</feature>
<feature type="strand" evidence="12">
    <location>
        <begin position="29"/>
        <end position="35"/>
    </location>
</feature>
<feature type="helix" evidence="12">
    <location>
        <begin position="38"/>
        <end position="48"/>
    </location>
</feature>
<feature type="helix" evidence="12">
    <location>
        <begin position="52"/>
        <end position="58"/>
    </location>
</feature>
<feature type="strand" evidence="12">
    <location>
        <begin position="66"/>
        <end position="68"/>
    </location>
</feature>
<feature type="strand" evidence="12">
    <location>
        <begin position="71"/>
        <end position="82"/>
    </location>
</feature>
<feature type="strand" evidence="12">
    <location>
        <begin position="84"/>
        <end position="86"/>
    </location>
</feature>
<feature type="strand" evidence="12">
    <location>
        <begin position="88"/>
        <end position="97"/>
    </location>
</feature>
<feature type="strand" evidence="12">
    <location>
        <begin position="100"/>
        <end position="107"/>
    </location>
</feature>
<feature type="helix" evidence="12">
    <location>
        <begin position="110"/>
        <end position="121"/>
    </location>
</feature>
<feature type="strand" evidence="12">
    <location>
        <begin position="125"/>
        <end position="127"/>
    </location>
</feature>
<feature type="turn" evidence="12">
    <location>
        <begin position="129"/>
        <end position="133"/>
    </location>
</feature>
<feature type="helix" evidence="12">
    <location>
        <begin position="134"/>
        <end position="164"/>
    </location>
</feature>
<feature type="turn" evidence="12">
    <location>
        <begin position="165"/>
        <end position="167"/>
    </location>
</feature>
<feature type="helix" evidence="12">
    <location>
        <begin position="171"/>
        <end position="203"/>
    </location>
</feature>
<feature type="helix" evidence="12">
    <location>
        <begin position="211"/>
        <end position="248"/>
    </location>
</feature>
<feature type="helix" evidence="13">
    <location>
        <begin position="269"/>
        <end position="276"/>
    </location>
</feature>
<feature type="helix" evidence="13">
    <location>
        <begin position="292"/>
        <end position="312"/>
    </location>
</feature>
<feature type="turn" evidence="13">
    <location>
        <begin position="313"/>
        <end position="315"/>
    </location>
</feature>